<dbReference type="EC" id="2.3.1.1"/>
<dbReference type="EMBL" id="AL646052">
    <property type="protein sequence ID" value="CAD14952.1"/>
    <property type="molecule type" value="Genomic_DNA"/>
</dbReference>
<dbReference type="SMR" id="Q8XZZ5"/>
<dbReference type="STRING" id="267608.RSc1250"/>
<dbReference type="EnsemblBacteria" id="CAD14952">
    <property type="protein sequence ID" value="CAD14952"/>
    <property type="gene ID" value="RSc1250"/>
</dbReference>
<dbReference type="KEGG" id="rso:RSc1250"/>
<dbReference type="eggNOG" id="COG0548">
    <property type="taxonomic scope" value="Bacteria"/>
</dbReference>
<dbReference type="eggNOG" id="COG1246">
    <property type="taxonomic scope" value="Bacteria"/>
</dbReference>
<dbReference type="HOGENOM" id="CLU_024773_0_0_4"/>
<dbReference type="UniPathway" id="UPA00068">
    <property type="reaction ID" value="UER00106"/>
</dbReference>
<dbReference type="Proteomes" id="UP000001436">
    <property type="component" value="Chromosome"/>
</dbReference>
<dbReference type="GO" id="GO:0005737">
    <property type="term" value="C:cytoplasm"/>
    <property type="evidence" value="ECO:0007669"/>
    <property type="project" value="UniProtKB-SubCell"/>
</dbReference>
<dbReference type="GO" id="GO:0004042">
    <property type="term" value="F:L-glutamate N-acetyltransferase activity"/>
    <property type="evidence" value="ECO:0007669"/>
    <property type="project" value="UniProtKB-UniRule"/>
</dbReference>
<dbReference type="GO" id="GO:0006526">
    <property type="term" value="P:L-arginine biosynthetic process"/>
    <property type="evidence" value="ECO:0007669"/>
    <property type="project" value="UniProtKB-UniRule"/>
</dbReference>
<dbReference type="CDD" id="cd04237">
    <property type="entry name" value="AAK_NAGS-ABP"/>
    <property type="match status" value="1"/>
</dbReference>
<dbReference type="CDD" id="cd04301">
    <property type="entry name" value="NAT_SF"/>
    <property type="match status" value="1"/>
</dbReference>
<dbReference type="Gene3D" id="3.40.630.30">
    <property type="match status" value="1"/>
</dbReference>
<dbReference type="Gene3D" id="3.40.1160.10">
    <property type="entry name" value="Acetylglutamate kinase-like"/>
    <property type="match status" value="1"/>
</dbReference>
<dbReference type="HAMAP" id="MF_01105">
    <property type="entry name" value="N_acetyl_glu_synth"/>
    <property type="match status" value="1"/>
</dbReference>
<dbReference type="InterPro" id="IPR036393">
    <property type="entry name" value="AceGlu_kinase-like_sf"/>
</dbReference>
<dbReference type="InterPro" id="IPR016181">
    <property type="entry name" value="Acyl_CoA_acyltransferase"/>
</dbReference>
<dbReference type="InterPro" id="IPR001048">
    <property type="entry name" value="Asp/Glu/Uridylate_kinase"/>
</dbReference>
<dbReference type="InterPro" id="IPR000182">
    <property type="entry name" value="GNAT_dom"/>
</dbReference>
<dbReference type="InterPro" id="IPR033719">
    <property type="entry name" value="NAGS_kin"/>
</dbReference>
<dbReference type="InterPro" id="IPR010167">
    <property type="entry name" value="NH2A_AcTrfase"/>
</dbReference>
<dbReference type="NCBIfam" id="TIGR01890">
    <property type="entry name" value="N-Ac-Glu-synth"/>
    <property type="match status" value="1"/>
</dbReference>
<dbReference type="NCBIfam" id="NF003641">
    <property type="entry name" value="PRK05279.1"/>
    <property type="match status" value="1"/>
</dbReference>
<dbReference type="PANTHER" id="PTHR30602">
    <property type="entry name" value="AMINO-ACID ACETYLTRANSFERASE"/>
    <property type="match status" value="1"/>
</dbReference>
<dbReference type="PANTHER" id="PTHR30602:SF12">
    <property type="entry name" value="AMINO-ACID ACETYLTRANSFERASE NAGS1, CHLOROPLASTIC-RELATED"/>
    <property type="match status" value="1"/>
</dbReference>
<dbReference type="Pfam" id="PF00696">
    <property type="entry name" value="AA_kinase"/>
    <property type="match status" value="1"/>
</dbReference>
<dbReference type="Pfam" id="PF00583">
    <property type="entry name" value="Acetyltransf_1"/>
    <property type="match status" value="1"/>
</dbReference>
<dbReference type="PIRSF" id="PIRSF000423">
    <property type="entry name" value="ArgA"/>
    <property type="match status" value="1"/>
</dbReference>
<dbReference type="SUPFAM" id="SSF55729">
    <property type="entry name" value="Acyl-CoA N-acyltransferases (Nat)"/>
    <property type="match status" value="1"/>
</dbReference>
<dbReference type="SUPFAM" id="SSF53633">
    <property type="entry name" value="Carbamate kinase-like"/>
    <property type="match status" value="1"/>
</dbReference>
<dbReference type="PROSITE" id="PS51186">
    <property type="entry name" value="GNAT"/>
    <property type="match status" value="1"/>
</dbReference>
<reference key="1">
    <citation type="journal article" date="2002" name="Nature">
        <title>Genome sequence of the plant pathogen Ralstonia solanacearum.</title>
        <authorList>
            <person name="Salanoubat M."/>
            <person name="Genin S."/>
            <person name="Artiguenave F."/>
            <person name="Gouzy J."/>
            <person name="Mangenot S."/>
            <person name="Arlat M."/>
            <person name="Billault A."/>
            <person name="Brottier P."/>
            <person name="Camus J.-C."/>
            <person name="Cattolico L."/>
            <person name="Chandler M."/>
            <person name="Choisne N."/>
            <person name="Claudel-Renard C."/>
            <person name="Cunnac S."/>
            <person name="Demange N."/>
            <person name="Gaspin C."/>
            <person name="Lavie M."/>
            <person name="Moisan A."/>
            <person name="Robert C."/>
            <person name="Saurin W."/>
            <person name="Schiex T."/>
            <person name="Siguier P."/>
            <person name="Thebault P."/>
            <person name="Whalen M."/>
            <person name="Wincker P."/>
            <person name="Levy M."/>
            <person name="Weissenbach J."/>
            <person name="Boucher C.A."/>
        </authorList>
    </citation>
    <scope>NUCLEOTIDE SEQUENCE [LARGE SCALE GENOMIC DNA]</scope>
    <source>
        <strain>ATCC BAA-1114 / GMI1000</strain>
    </source>
</reference>
<accession>Q8XZZ5</accession>
<feature type="chain" id="PRO_0000186803" description="Amino-acid acetyltransferase">
    <location>
        <begin position="1"/>
        <end position="451"/>
    </location>
</feature>
<feature type="domain" description="N-acetyltransferase">
    <location>
        <begin position="305"/>
        <end position="451"/>
    </location>
</feature>
<gene>
    <name type="primary">argA</name>
    <name type="ordered locus">RSc1250</name>
    <name type="ORF">RS02762</name>
</gene>
<sequence>MAHTPATADVAPIPPTPEQQQFVDWLRAVAPYIHAFRDKTFVIGFGGELVKAGMLGALVNDIALLHAMGMHIVLVHGSRPQVEEQLALRHVQTQFVDGIRVTDNAALESAKEASGELRLDIEATFSQALPNTPMAGARISVVSGNFVTARPVGIVNGVDFQHTGLVRKIDAESIQHSLSNRKIVLLSPLGFSPTGQAFNLSMEDVATNTATALKADKLIFITEVPGIMDRVGKLQQELSMESAIERLREGRLSADTAYYLQHIVKAMRGGVRRAHLIPFALDGSILLELFLHDGVGTMVSHTDLEYLREATLDDVGGIVQLIEPLEADGTLVPRERRLLERDIANFSVIEHDGIIFGCAALYPYPKEGVGEMACLTVAPDTQGTGDGERLLKHVEARARAVGLKRLFVLTTRTEHWFLKRGFVHATVDDLPEDRRKLYNWQRRSMVLMKKL</sequence>
<organism>
    <name type="scientific">Ralstonia nicotianae (strain ATCC BAA-1114 / GMI1000)</name>
    <name type="common">Ralstonia solanacearum</name>
    <dbReference type="NCBI Taxonomy" id="267608"/>
    <lineage>
        <taxon>Bacteria</taxon>
        <taxon>Pseudomonadati</taxon>
        <taxon>Pseudomonadota</taxon>
        <taxon>Betaproteobacteria</taxon>
        <taxon>Burkholderiales</taxon>
        <taxon>Burkholderiaceae</taxon>
        <taxon>Ralstonia</taxon>
        <taxon>Ralstonia solanacearum species complex</taxon>
    </lineage>
</organism>
<evidence type="ECO:0000250" key="1"/>
<evidence type="ECO:0000305" key="2"/>
<proteinExistence type="inferred from homology"/>
<name>ARGA_RALN1</name>
<protein>
    <recommendedName>
        <fullName>Amino-acid acetyltransferase</fullName>
        <ecNumber>2.3.1.1</ecNumber>
    </recommendedName>
    <alternativeName>
        <fullName>N-acetylglutamate synthase</fullName>
        <shortName>AGS</shortName>
        <shortName>NAGS</shortName>
    </alternativeName>
</protein>
<comment type="catalytic activity">
    <reaction>
        <text>L-glutamate + acetyl-CoA = N-acetyl-L-glutamate + CoA + H(+)</text>
        <dbReference type="Rhea" id="RHEA:24292"/>
        <dbReference type="ChEBI" id="CHEBI:15378"/>
        <dbReference type="ChEBI" id="CHEBI:29985"/>
        <dbReference type="ChEBI" id="CHEBI:44337"/>
        <dbReference type="ChEBI" id="CHEBI:57287"/>
        <dbReference type="ChEBI" id="CHEBI:57288"/>
        <dbReference type="EC" id="2.3.1.1"/>
    </reaction>
</comment>
<comment type="pathway">
    <text>Amino-acid biosynthesis; L-arginine biosynthesis; N(2)-acetyl-L-ornithine from L-glutamate: step 1/4.</text>
</comment>
<comment type="subcellular location">
    <subcellularLocation>
        <location evidence="1">Cytoplasm</location>
    </subcellularLocation>
</comment>
<comment type="miscellaneous">
    <text>In bacteria which possess the bifunctional enzyme ornithine acetyltransferase/N-acetylglutamate synthase (ArgJ), ArgA fulfills an anaplerotic role.</text>
</comment>
<comment type="similarity">
    <text evidence="2">Belongs to the acetyltransferase family. ArgA subfamily.</text>
</comment>
<keyword id="KW-0012">Acyltransferase</keyword>
<keyword id="KW-0028">Amino-acid biosynthesis</keyword>
<keyword id="KW-0055">Arginine biosynthesis</keyword>
<keyword id="KW-0963">Cytoplasm</keyword>
<keyword id="KW-1185">Reference proteome</keyword>
<keyword id="KW-0808">Transferase</keyword>